<protein>
    <recommendedName>
        <fullName evidence="1">DNA-directed RNA polymerase subunit beta</fullName>
        <shortName evidence="1">RNAP subunit beta</shortName>
        <ecNumber evidence="1">2.7.7.6</ecNumber>
    </recommendedName>
    <alternativeName>
        <fullName evidence="1">RNA polymerase subunit beta</fullName>
    </alternativeName>
    <alternativeName>
        <fullName evidence="1">Transcriptase subunit beta</fullName>
    </alternativeName>
</protein>
<dbReference type="EC" id="2.7.7.6" evidence="1"/>
<dbReference type="EMBL" id="CP000026">
    <property type="protein sequence ID" value="AAV79743.1"/>
    <property type="molecule type" value="Genomic_DNA"/>
</dbReference>
<dbReference type="RefSeq" id="WP_000263105.1">
    <property type="nucleotide sequence ID" value="NC_006511.1"/>
</dbReference>
<dbReference type="SMR" id="Q5PK93"/>
<dbReference type="KEGG" id="spt:SPA3991"/>
<dbReference type="HOGENOM" id="CLU_000524_4_0_6"/>
<dbReference type="Proteomes" id="UP000008185">
    <property type="component" value="Chromosome"/>
</dbReference>
<dbReference type="GO" id="GO:0000428">
    <property type="term" value="C:DNA-directed RNA polymerase complex"/>
    <property type="evidence" value="ECO:0007669"/>
    <property type="project" value="UniProtKB-KW"/>
</dbReference>
<dbReference type="GO" id="GO:0003677">
    <property type="term" value="F:DNA binding"/>
    <property type="evidence" value="ECO:0007669"/>
    <property type="project" value="UniProtKB-UniRule"/>
</dbReference>
<dbReference type="GO" id="GO:0003899">
    <property type="term" value="F:DNA-directed RNA polymerase activity"/>
    <property type="evidence" value="ECO:0007669"/>
    <property type="project" value="UniProtKB-UniRule"/>
</dbReference>
<dbReference type="GO" id="GO:0032549">
    <property type="term" value="F:ribonucleoside binding"/>
    <property type="evidence" value="ECO:0007669"/>
    <property type="project" value="InterPro"/>
</dbReference>
<dbReference type="GO" id="GO:0006351">
    <property type="term" value="P:DNA-templated transcription"/>
    <property type="evidence" value="ECO:0007669"/>
    <property type="project" value="UniProtKB-UniRule"/>
</dbReference>
<dbReference type="CDD" id="cd00653">
    <property type="entry name" value="RNA_pol_B_RPB2"/>
    <property type="match status" value="1"/>
</dbReference>
<dbReference type="FunFam" id="2.30.150.10:FF:000001">
    <property type="entry name" value="DNA-directed RNA polymerase subunit beta"/>
    <property type="match status" value="1"/>
</dbReference>
<dbReference type="FunFam" id="2.40.270.10:FF:000003">
    <property type="entry name" value="DNA-directed RNA polymerase subunit beta"/>
    <property type="match status" value="1"/>
</dbReference>
<dbReference type="FunFam" id="2.40.270.10:FF:000004">
    <property type="entry name" value="DNA-directed RNA polymerase subunit beta"/>
    <property type="match status" value="1"/>
</dbReference>
<dbReference type="FunFam" id="2.40.50.100:FF:000006">
    <property type="entry name" value="DNA-directed RNA polymerase subunit beta"/>
    <property type="match status" value="1"/>
</dbReference>
<dbReference type="FunFam" id="2.40.50.150:FF:000001">
    <property type="entry name" value="DNA-directed RNA polymerase subunit beta"/>
    <property type="match status" value="1"/>
</dbReference>
<dbReference type="FunFam" id="3.90.1100.10:FF:000002">
    <property type="entry name" value="DNA-directed RNA polymerase subunit beta"/>
    <property type="match status" value="1"/>
</dbReference>
<dbReference type="FunFam" id="3.90.1110.10:FF:000001">
    <property type="entry name" value="DNA-directed RNA polymerase subunit beta"/>
    <property type="match status" value="1"/>
</dbReference>
<dbReference type="FunFam" id="3.90.1110.10:FF:000004">
    <property type="entry name" value="DNA-directed RNA polymerase subunit beta"/>
    <property type="match status" value="1"/>
</dbReference>
<dbReference type="FunFam" id="3.90.1800.10:FF:000001">
    <property type="entry name" value="DNA-directed RNA polymerase subunit beta"/>
    <property type="match status" value="1"/>
</dbReference>
<dbReference type="Gene3D" id="2.40.50.100">
    <property type="match status" value="1"/>
</dbReference>
<dbReference type="Gene3D" id="2.40.50.150">
    <property type="match status" value="1"/>
</dbReference>
<dbReference type="Gene3D" id="3.90.1100.10">
    <property type="match status" value="2"/>
</dbReference>
<dbReference type="Gene3D" id="6.10.140.1670">
    <property type="match status" value="1"/>
</dbReference>
<dbReference type="Gene3D" id="2.30.150.10">
    <property type="entry name" value="DNA-directed RNA polymerase, beta subunit, external 1 domain"/>
    <property type="match status" value="1"/>
</dbReference>
<dbReference type="Gene3D" id="2.40.270.10">
    <property type="entry name" value="DNA-directed RNA polymerase, subunit 2, domain 6"/>
    <property type="match status" value="1"/>
</dbReference>
<dbReference type="Gene3D" id="3.90.1800.10">
    <property type="entry name" value="RNA polymerase alpha subunit dimerisation domain"/>
    <property type="match status" value="1"/>
</dbReference>
<dbReference type="Gene3D" id="3.90.1110.10">
    <property type="entry name" value="RNA polymerase Rpb2, domain 2"/>
    <property type="match status" value="1"/>
</dbReference>
<dbReference type="HAMAP" id="MF_01321">
    <property type="entry name" value="RNApol_bact_RpoB"/>
    <property type="match status" value="1"/>
</dbReference>
<dbReference type="InterPro" id="IPR042107">
    <property type="entry name" value="DNA-dir_RNA_pol_bsu_ext_1_sf"/>
</dbReference>
<dbReference type="InterPro" id="IPR019462">
    <property type="entry name" value="DNA-dir_RNA_pol_bsu_external_1"/>
</dbReference>
<dbReference type="InterPro" id="IPR015712">
    <property type="entry name" value="DNA-dir_RNA_pol_su2"/>
</dbReference>
<dbReference type="InterPro" id="IPR007120">
    <property type="entry name" value="DNA-dir_RNAP_su2_dom"/>
</dbReference>
<dbReference type="InterPro" id="IPR037033">
    <property type="entry name" value="DNA-dir_RNAP_su2_hyb_sf"/>
</dbReference>
<dbReference type="InterPro" id="IPR010243">
    <property type="entry name" value="RNA_pol_bsu_bac"/>
</dbReference>
<dbReference type="InterPro" id="IPR007121">
    <property type="entry name" value="RNA_pol_bsu_CS"/>
</dbReference>
<dbReference type="InterPro" id="IPR007644">
    <property type="entry name" value="RNA_pol_bsu_protrusion"/>
</dbReference>
<dbReference type="InterPro" id="IPR007642">
    <property type="entry name" value="RNA_pol_Rpb2_2"/>
</dbReference>
<dbReference type="InterPro" id="IPR037034">
    <property type="entry name" value="RNA_pol_Rpb2_2_sf"/>
</dbReference>
<dbReference type="InterPro" id="IPR007645">
    <property type="entry name" value="RNA_pol_Rpb2_3"/>
</dbReference>
<dbReference type="InterPro" id="IPR007641">
    <property type="entry name" value="RNA_pol_Rpb2_7"/>
</dbReference>
<dbReference type="InterPro" id="IPR014724">
    <property type="entry name" value="RNA_pol_RPB2_OB-fold"/>
</dbReference>
<dbReference type="NCBIfam" id="NF001616">
    <property type="entry name" value="PRK00405.1"/>
    <property type="match status" value="1"/>
</dbReference>
<dbReference type="NCBIfam" id="TIGR02013">
    <property type="entry name" value="rpoB"/>
    <property type="match status" value="1"/>
</dbReference>
<dbReference type="PANTHER" id="PTHR20856">
    <property type="entry name" value="DNA-DIRECTED RNA POLYMERASE I SUBUNIT 2"/>
    <property type="match status" value="1"/>
</dbReference>
<dbReference type="Pfam" id="PF04563">
    <property type="entry name" value="RNA_pol_Rpb2_1"/>
    <property type="match status" value="1"/>
</dbReference>
<dbReference type="Pfam" id="PF04561">
    <property type="entry name" value="RNA_pol_Rpb2_2"/>
    <property type="match status" value="2"/>
</dbReference>
<dbReference type="Pfam" id="PF04565">
    <property type="entry name" value="RNA_pol_Rpb2_3"/>
    <property type="match status" value="1"/>
</dbReference>
<dbReference type="Pfam" id="PF10385">
    <property type="entry name" value="RNA_pol_Rpb2_45"/>
    <property type="match status" value="1"/>
</dbReference>
<dbReference type="Pfam" id="PF00562">
    <property type="entry name" value="RNA_pol_Rpb2_6"/>
    <property type="match status" value="1"/>
</dbReference>
<dbReference type="Pfam" id="PF04560">
    <property type="entry name" value="RNA_pol_Rpb2_7"/>
    <property type="match status" value="1"/>
</dbReference>
<dbReference type="SUPFAM" id="SSF64484">
    <property type="entry name" value="beta and beta-prime subunits of DNA dependent RNA-polymerase"/>
    <property type="match status" value="1"/>
</dbReference>
<dbReference type="PROSITE" id="PS01166">
    <property type="entry name" value="RNA_POL_BETA"/>
    <property type="match status" value="1"/>
</dbReference>
<feature type="chain" id="PRO_0000224104" description="DNA-directed RNA polymerase subunit beta">
    <location>
        <begin position="1"/>
        <end position="1342"/>
    </location>
</feature>
<reference key="1">
    <citation type="journal article" date="2004" name="Nat. Genet.">
        <title>Comparison of genome degradation in Paratyphi A and Typhi, human-restricted serovars of Salmonella enterica that cause typhoid.</title>
        <authorList>
            <person name="McClelland M."/>
            <person name="Sanderson K.E."/>
            <person name="Clifton S.W."/>
            <person name="Latreille P."/>
            <person name="Porwollik S."/>
            <person name="Sabo A."/>
            <person name="Meyer R."/>
            <person name="Bieri T."/>
            <person name="Ozersky P."/>
            <person name="McLellan M."/>
            <person name="Harkins C.R."/>
            <person name="Wang C."/>
            <person name="Nguyen C."/>
            <person name="Berghoff A."/>
            <person name="Elliott G."/>
            <person name="Kohlberg S."/>
            <person name="Strong C."/>
            <person name="Du F."/>
            <person name="Carter J."/>
            <person name="Kremizki C."/>
            <person name="Layman D."/>
            <person name="Leonard S."/>
            <person name="Sun H."/>
            <person name="Fulton L."/>
            <person name="Nash W."/>
            <person name="Miner T."/>
            <person name="Minx P."/>
            <person name="Delehaunty K."/>
            <person name="Fronick C."/>
            <person name="Magrini V."/>
            <person name="Nhan M."/>
            <person name="Warren W."/>
            <person name="Florea L."/>
            <person name="Spieth J."/>
            <person name="Wilson R.K."/>
        </authorList>
    </citation>
    <scope>NUCLEOTIDE SEQUENCE [LARGE SCALE GENOMIC DNA]</scope>
    <source>
        <strain>ATCC 9150 / SARB42</strain>
    </source>
</reference>
<organism>
    <name type="scientific">Salmonella paratyphi A (strain ATCC 9150 / SARB42)</name>
    <dbReference type="NCBI Taxonomy" id="295319"/>
    <lineage>
        <taxon>Bacteria</taxon>
        <taxon>Pseudomonadati</taxon>
        <taxon>Pseudomonadota</taxon>
        <taxon>Gammaproteobacteria</taxon>
        <taxon>Enterobacterales</taxon>
        <taxon>Enterobacteriaceae</taxon>
        <taxon>Salmonella</taxon>
    </lineage>
</organism>
<proteinExistence type="inferred from homology"/>
<keyword id="KW-0240">DNA-directed RNA polymerase</keyword>
<keyword id="KW-0548">Nucleotidyltransferase</keyword>
<keyword id="KW-0804">Transcription</keyword>
<keyword id="KW-0808">Transferase</keyword>
<evidence type="ECO:0000255" key="1">
    <source>
        <dbReference type="HAMAP-Rule" id="MF_01321"/>
    </source>
</evidence>
<gene>
    <name evidence="1" type="primary">rpoB</name>
    <name type="ordered locus">SPA3991</name>
</gene>
<accession>Q5PK93</accession>
<sequence>MVYSYTEKKRIRKDFGKRPQVLDVPYLLSIQLDSFQKFIEQDPEGQYGLEAAFRSVFPIQSYSGNSELQYVSYRLGEPVFDVQECQIRGVTYSAPLRVKLRLVIYEREAPEGTVKDIKEQEVYMGEIPLMTDNGTFVINGTERVIVSQLHRSPGVFFDSDKGKTHSSGKVLYNARIIPYRGSWLDFEFDPKDNLFVRIDRRRKLPATIILRALNYTTEQILDLFFEKVVFEIRDNKLQMELIPERLRGETASFDIEANGKVYVEKGRRITARHIRQLEKDDIKHIEVPVEYIAGKVVSKDYVDESTGELICAANMELSLDLLAKLSQSGHKRIETLFTNDLDHGPYISETVRVDPTNDRLSALVEIYRMMRPGEPPTREAAESLFENLFFSEDRYDLSAVGRMKFNRSLLRDEIEGSGILSKDDIIDVMKKLIDIRNGKGEVDDIDHLGNRRIRSVGEMAENQFRVGLVRVERAVKERLSLGDLDTLMPQDMINAKPISAAVKEFFGSSQLSQFMDQNNPLSEITHKRRISALGPGGLTRERAGFEVRDVHPTHYGRVCPIETPEGPNIGLINSLSVYAQTNEYGFLETPYRRVVDGVVTDEIHYLSAIEEGNYVIAQANSNLDDEGHFVEDLVTCRSKGESSLFSRDQVDYMDVSTQQVVSVGASLIPFLEHDDANRALMGANMQRQAVPTLRADKPLVGTGMERAVAVDSGVTAVAKRGGTVQYVDASRIVIKVNEDEMYPGEAGIDIYNLTKYTRSNQNTCINQMPCVSLGEPVERGDVLADGPSTDLGELALGQNMRVAFMPWNGYNFEDSILVSERVVQEDRFTTIHIQELACVSRDTKLGPEEITADIPNVGEAALSKLDESGIVYIGAEVTGGDILVGKVTPKGETQLTPEEKLLRAIFGEKASDVKDSSLRVPNGVSGTVIDVQVFTRDGVEKDKRALEIEEMQLKQAKKDLSEELQILEAGLFSRIRAVLVSGGVEAEKLDKLPRDRWLELGLTDEEKQNQLEQLAEQYDELKHEFEKKLEAKRRKITQGDDLAPGVLKIVKVYLAVKRRIQPGDKMAGRHGNKGVISKINPIEDMPYDENGTPVDIVLNPLGVPSRMNIGQILETHLGMAAKGIGDKINAMLKQQQEVAKLREFIQRAYDLGADVRQKVDLSTFSDDEVLRLAENLRKGMPIATPVFDGAKEAEIKELLKLGDLPTSGQITLFDGRTGEQFERPVTVGYMYMLKLNHLVDDKMHARSTGSYSLVTQQPLGGKAQFGGQRFGEMEVWALEAYGAAYTLQEMLTVKSDDVNGRTKMYKNIVDGNHQMEPGMPESFNVLLKEIRSLGINIELEDE</sequence>
<comment type="function">
    <text evidence="1">DNA-dependent RNA polymerase catalyzes the transcription of DNA into RNA using the four ribonucleoside triphosphates as substrates.</text>
</comment>
<comment type="catalytic activity">
    <reaction evidence="1">
        <text>RNA(n) + a ribonucleoside 5'-triphosphate = RNA(n+1) + diphosphate</text>
        <dbReference type="Rhea" id="RHEA:21248"/>
        <dbReference type="Rhea" id="RHEA-COMP:14527"/>
        <dbReference type="Rhea" id="RHEA-COMP:17342"/>
        <dbReference type="ChEBI" id="CHEBI:33019"/>
        <dbReference type="ChEBI" id="CHEBI:61557"/>
        <dbReference type="ChEBI" id="CHEBI:140395"/>
        <dbReference type="EC" id="2.7.7.6"/>
    </reaction>
</comment>
<comment type="subunit">
    <text evidence="1">The RNAP catalytic core consists of 2 alpha, 1 beta, 1 beta' and 1 omega subunit. When a sigma factor is associated with the core the holoenzyme is formed, which can initiate transcription.</text>
</comment>
<comment type="similarity">
    <text evidence="1">Belongs to the RNA polymerase beta chain family.</text>
</comment>
<name>RPOB_SALPA</name>